<dbReference type="EC" id="7.2.2.8"/>
<dbReference type="EMBL" id="BA000018">
    <property type="protein sequence ID" value="BAB43648.1"/>
    <property type="molecule type" value="Genomic_DNA"/>
</dbReference>
<dbReference type="PIR" id="F90060">
    <property type="entry name" value="F90060"/>
</dbReference>
<dbReference type="RefSeq" id="WP_000024139.1">
    <property type="nucleotide sequence ID" value="NC_002745.2"/>
</dbReference>
<dbReference type="SMR" id="Q7A3E6"/>
<dbReference type="TCDB" id="3.A.3.5.19">
    <property type="family name" value="the p-type atpase (p-atpase) superfamily"/>
</dbReference>
<dbReference type="EnsemblBacteria" id="BAB43648">
    <property type="protein sequence ID" value="BAB43648"/>
    <property type="gene ID" value="BAB43648"/>
</dbReference>
<dbReference type="KEGG" id="sau:SA2344"/>
<dbReference type="HOGENOM" id="CLU_001771_0_3_9"/>
<dbReference type="GO" id="GO:0005886">
    <property type="term" value="C:plasma membrane"/>
    <property type="evidence" value="ECO:0007669"/>
    <property type="project" value="UniProtKB-SubCell"/>
</dbReference>
<dbReference type="GO" id="GO:0005524">
    <property type="term" value="F:ATP binding"/>
    <property type="evidence" value="ECO:0007669"/>
    <property type="project" value="UniProtKB-KW"/>
</dbReference>
<dbReference type="GO" id="GO:0016887">
    <property type="term" value="F:ATP hydrolysis activity"/>
    <property type="evidence" value="ECO:0007669"/>
    <property type="project" value="InterPro"/>
</dbReference>
<dbReference type="GO" id="GO:0005507">
    <property type="term" value="F:copper ion binding"/>
    <property type="evidence" value="ECO:0007669"/>
    <property type="project" value="InterPro"/>
</dbReference>
<dbReference type="GO" id="GO:0043682">
    <property type="term" value="F:P-type divalent copper transporter activity"/>
    <property type="evidence" value="ECO:0007669"/>
    <property type="project" value="TreeGrafter"/>
</dbReference>
<dbReference type="GO" id="GO:0140581">
    <property type="term" value="F:P-type monovalent copper transporter activity"/>
    <property type="evidence" value="ECO:0007669"/>
    <property type="project" value="UniProtKB-EC"/>
</dbReference>
<dbReference type="GO" id="GO:0055070">
    <property type="term" value="P:copper ion homeostasis"/>
    <property type="evidence" value="ECO:0007669"/>
    <property type="project" value="TreeGrafter"/>
</dbReference>
<dbReference type="CDD" id="cd00371">
    <property type="entry name" value="HMA"/>
    <property type="match status" value="2"/>
</dbReference>
<dbReference type="CDD" id="cd02094">
    <property type="entry name" value="P-type_ATPase_Cu-like"/>
    <property type="match status" value="1"/>
</dbReference>
<dbReference type="FunFam" id="3.40.1110.10:FF:000038">
    <property type="entry name" value="Copper-exporting P-type ATPase"/>
    <property type="match status" value="1"/>
</dbReference>
<dbReference type="FunFam" id="3.40.1110.10:FF:000049">
    <property type="entry name" value="Copper-exporting P-type ATPase"/>
    <property type="match status" value="1"/>
</dbReference>
<dbReference type="FunFam" id="2.70.150.10:FF:000020">
    <property type="entry name" value="Copper-exporting P-type ATPase A"/>
    <property type="match status" value="1"/>
</dbReference>
<dbReference type="FunFam" id="3.30.70.100:FF:000005">
    <property type="entry name" value="Copper-exporting P-type ATPase A"/>
    <property type="match status" value="2"/>
</dbReference>
<dbReference type="FunFam" id="3.40.50.1000:FF:000144">
    <property type="entry name" value="copper-transporting ATPase 1 isoform X2"/>
    <property type="match status" value="1"/>
</dbReference>
<dbReference type="Gene3D" id="3.30.70.100">
    <property type="match status" value="2"/>
</dbReference>
<dbReference type="Gene3D" id="3.40.1110.10">
    <property type="entry name" value="Calcium-transporting ATPase, cytoplasmic domain N"/>
    <property type="match status" value="2"/>
</dbReference>
<dbReference type="Gene3D" id="2.70.150.10">
    <property type="entry name" value="Calcium-transporting ATPase, cytoplasmic transduction domain A"/>
    <property type="match status" value="1"/>
</dbReference>
<dbReference type="Gene3D" id="3.40.50.1000">
    <property type="entry name" value="HAD superfamily/HAD-like"/>
    <property type="match status" value="1"/>
</dbReference>
<dbReference type="InterPro" id="IPR023299">
    <property type="entry name" value="ATPase_P-typ_cyto_dom_N"/>
</dbReference>
<dbReference type="InterPro" id="IPR018303">
    <property type="entry name" value="ATPase_P-typ_P_site"/>
</dbReference>
<dbReference type="InterPro" id="IPR023298">
    <property type="entry name" value="ATPase_P-typ_TM_dom_sf"/>
</dbReference>
<dbReference type="InterPro" id="IPR008250">
    <property type="entry name" value="ATPase_P-typ_transduc_dom_A_sf"/>
</dbReference>
<dbReference type="InterPro" id="IPR036412">
    <property type="entry name" value="HAD-like_sf"/>
</dbReference>
<dbReference type="InterPro" id="IPR023214">
    <property type="entry name" value="HAD_sf"/>
</dbReference>
<dbReference type="InterPro" id="IPR017969">
    <property type="entry name" value="Heavy-metal-associated_CS"/>
</dbReference>
<dbReference type="InterPro" id="IPR006122">
    <property type="entry name" value="HMA_Cu_ion-bd"/>
</dbReference>
<dbReference type="InterPro" id="IPR006121">
    <property type="entry name" value="HMA_dom"/>
</dbReference>
<dbReference type="InterPro" id="IPR036163">
    <property type="entry name" value="HMA_dom_sf"/>
</dbReference>
<dbReference type="InterPro" id="IPR027256">
    <property type="entry name" value="P-typ_ATPase_IB"/>
</dbReference>
<dbReference type="InterPro" id="IPR001757">
    <property type="entry name" value="P_typ_ATPase"/>
</dbReference>
<dbReference type="InterPro" id="IPR044492">
    <property type="entry name" value="P_typ_ATPase_HD_dom"/>
</dbReference>
<dbReference type="NCBIfam" id="TIGR01511">
    <property type="entry name" value="ATPase-IB1_Cu"/>
    <property type="match status" value="1"/>
</dbReference>
<dbReference type="NCBIfam" id="TIGR01525">
    <property type="entry name" value="ATPase-IB_hvy"/>
    <property type="match status" value="1"/>
</dbReference>
<dbReference type="NCBIfam" id="TIGR01494">
    <property type="entry name" value="ATPase_P-type"/>
    <property type="match status" value="1"/>
</dbReference>
<dbReference type="NCBIfam" id="TIGR00003">
    <property type="entry name" value="copper ion binding protein"/>
    <property type="match status" value="2"/>
</dbReference>
<dbReference type="PANTHER" id="PTHR43520">
    <property type="entry name" value="ATP7, ISOFORM B"/>
    <property type="match status" value="1"/>
</dbReference>
<dbReference type="PANTHER" id="PTHR43520:SF8">
    <property type="entry name" value="P-TYPE CU(+) TRANSPORTER"/>
    <property type="match status" value="1"/>
</dbReference>
<dbReference type="Pfam" id="PF00122">
    <property type="entry name" value="E1-E2_ATPase"/>
    <property type="match status" value="1"/>
</dbReference>
<dbReference type="Pfam" id="PF00403">
    <property type="entry name" value="HMA"/>
    <property type="match status" value="2"/>
</dbReference>
<dbReference type="Pfam" id="PF00702">
    <property type="entry name" value="Hydrolase"/>
    <property type="match status" value="1"/>
</dbReference>
<dbReference type="PRINTS" id="PR00119">
    <property type="entry name" value="CATATPASE"/>
</dbReference>
<dbReference type="PRINTS" id="PR00943">
    <property type="entry name" value="CUATPASE"/>
</dbReference>
<dbReference type="SFLD" id="SFLDS00003">
    <property type="entry name" value="Haloacid_Dehalogenase"/>
    <property type="match status" value="1"/>
</dbReference>
<dbReference type="SFLD" id="SFLDF00027">
    <property type="entry name" value="p-type_atpase"/>
    <property type="match status" value="1"/>
</dbReference>
<dbReference type="SUPFAM" id="SSF81653">
    <property type="entry name" value="Calcium ATPase, transduction domain A"/>
    <property type="match status" value="1"/>
</dbReference>
<dbReference type="SUPFAM" id="SSF81665">
    <property type="entry name" value="Calcium ATPase, transmembrane domain M"/>
    <property type="match status" value="1"/>
</dbReference>
<dbReference type="SUPFAM" id="SSF56784">
    <property type="entry name" value="HAD-like"/>
    <property type="match status" value="1"/>
</dbReference>
<dbReference type="SUPFAM" id="SSF55008">
    <property type="entry name" value="HMA, heavy metal-associated domain"/>
    <property type="match status" value="2"/>
</dbReference>
<dbReference type="PROSITE" id="PS00154">
    <property type="entry name" value="ATPASE_E1_E2"/>
    <property type="match status" value="1"/>
</dbReference>
<dbReference type="PROSITE" id="PS01047">
    <property type="entry name" value="HMA_1"/>
    <property type="match status" value="2"/>
</dbReference>
<dbReference type="PROSITE" id="PS50846">
    <property type="entry name" value="HMA_2"/>
    <property type="match status" value="2"/>
</dbReference>
<comment type="function">
    <text evidence="1">Involved in copper export.</text>
</comment>
<comment type="catalytic activity">
    <reaction>
        <text>Cu(+)(in) + ATP + H2O = Cu(+)(out) + ADP + phosphate + H(+)</text>
        <dbReference type="Rhea" id="RHEA:25792"/>
        <dbReference type="ChEBI" id="CHEBI:15377"/>
        <dbReference type="ChEBI" id="CHEBI:15378"/>
        <dbReference type="ChEBI" id="CHEBI:30616"/>
        <dbReference type="ChEBI" id="CHEBI:43474"/>
        <dbReference type="ChEBI" id="CHEBI:49552"/>
        <dbReference type="ChEBI" id="CHEBI:456216"/>
        <dbReference type="EC" id="7.2.2.8"/>
    </reaction>
</comment>
<comment type="subcellular location">
    <subcellularLocation>
        <location evidence="1">Cell membrane</location>
        <topology evidence="1">Multi-pass membrane protein</topology>
    </subcellularLocation>
</comment>
<comment type="similarity">
    <text evidence="4">Belongs to the cation transport ATPase (P-type) (TC 3.A.3) family. Type IB subfamily.</text>
</comment>
<proteinExistence type="evidence at protein level"/>
<organism>
    <name type="scientific">Staphylococcus aureus (strain N315)</name>
    <dbReference type="NCBI Taxonomy" id="158879"/>
    <lineage>
        <taxon>Bacteria</taxon>
        <taxon>Bacillati</taxon>
        <taxon>Bacillota</taxon>
        <taxon>Bacilli</taxon>
        <taxon>Bacillales</taxon>
        <taxon>Staphylococcaceae</taxon>
        <taxon>Staphylococcus</taxon>
    </lineage>
</organism>
<sequence>MANTKKTTLDITGMTCAACSNRIEKKLNKLDDVNAQVNLTTEKATVEYNPDQHDVQEFINTIQHLGYGVTVETVELDITGMTCAACSSRIEKVLNKMNGVQNATVNLTTEQAKVDYYPEETDADKLVTRIQKLGYDASIKDNNKDQTSRKAEALQHKLIKLIISAVLSLPLLMLMFVHLFNMHIPALFTNPWFQFILATPVQFIIGWQFYVGAYKNLRNGGANMDVLVAVGTSAAYFYSIYEMVRWLNGSTTQPHLYFETSAVLLTLILFGKYLEARAKSQTTNALGELLSLQAKEARILKDGNEVMIPLNEVHVGDTLIVKPGEKIPVDGKIIKGMTAIDESMLTGESIPVEKNVDDTVIGSTMNKNGTITMTATKVGGDTALANIIKVVEEAQSSKAPIQRLADIISGYFVPIVVGIALLIFIVWITLVTPGTFEPALVASISVLVIACPCALGLATPTSIMVGTGRAAENGILFKGGEFVERTHQIDTIVLDKTGTITNGRPVVTDYHGDNQTLQLLATAEKDSEHPLAEAIVNYAKEKQLTLTETTTFKAVPGHGIEATIDHHHILVGNRKLMADNDISLPKHISDDLTHYERDGKTAMLIAVNYSLTGIIAVADTVKDHAKDAIKQLHDMGIEVAMLTGDNKNTAQAIAKQVGIDTVIADILPEEKAAQIAKLQQQGKKVAMVGDGVNDAPALVKADIGIAIGTGTEVAIEAADITILGGDLMLIPKAIYASKATIRNIRQNLFWAFGYNIAGIPIAALGLLAPWVAGAAMALSSVSVVTNALRLKKMRLEPRRKDA</sequence>
<keyword id="KW-0067">ATP-binding</keyword>
<keyword id="KW-1003">Cell membrane</keyword>
<keyword id="KW-0186">Copper</keyword>
<keyword id="KW-0187">Copper transport</keyword>
<keyword id="KW-0406">Ion transport</keyword>
<keyword id="KW-0460">Magnesium</keyword>
<keyword id="KW-0472">Membrane</keyword>
<keyword id="KW-0479">Metal-binding</keyword>
<keyword id="KW-0547">Nucleotide-binding</keyword>
<keyword id="KW-0597">Phosphoprotein</keyword>
<keyword id="KW-0677">Repeat</keyword>
<keyword id="KW-1278">Translocase</keyword>
<keyword id="KW-0812">Transmembrane</keyword>
<keyword id="KW-1133">Transmembrane helix</keyword>
<keyword id="KW-0813">Transport</keyword>
<accession>Q7A3E6</accession>
<feature type="chain" id="PRO_0000350592" description="Copper-exporting P-type ATPase">
    <location>
        <begin position="1"/>
        <end position="802"/>
    </location>
</feature>
<feature type="transmembrane region" description="Helical" evidence="2">
    <location>
        <begin position="161"/>
        <end position="181"/>
    </location>
</feature>
<feature type="transmembrane region" description="Helical" evidence="2">
    <location>
        <begin position="192"/>
        <end position="212"/>
    </location>
</feature>
<feature type="transmembrane region" description="Helical" evidence="2">
    <location>
        <begin position="224"/>
        <end position="244"/>
    </location>
</feature>
<feature type="transmembrane region" description="Helical" evidence="2">
    <location>
        <begin position="256"/>
        <end position="276"/>
    </location>
</feature>
<feature type="transmembrane region" description="Helical" evidence="2">
    <location>
        <begin position="411"/>
        <end position="431"/>
    </location>
</feature>
<feature type="transmembrane region" description="Helical" evidence="2">
    <location>
        <begin position="438"/>
        <end position="458"/>
    </location>
</feature>
<feature type="transmembrane region" description="Helical" evidence="2">
    <location>
        <begin position="748"/>
        <end position="767"/>
    </location>
</feature>
<feature type="transmembrane region" description="Helical" evidence="2">
    <location>
        <begin position="771"/>
        <end position="790"/>
    </location>
</feature>
<feature type="domain" description="HMA 1" evidence="3">
    <location>
        <begin position="5"/>
        <end position="70"/>
    </location>
</feature>
<feature type="domain" description="HMA 2" evidence="3">
    <location>
        <begin position="72"/>
        <end position="138"/>
    </location>
</feature>
<feature type="active site" description="4-aspartylphosphate intermediate" evidence="1">
    <location>
        <position position="495"/>
    </location>
</feature>
<feature type="binding site" evidence="3">
    <location>
        <position position="16"/>
    </location>
    <ligand>
        <name>Cu(+)</name>
        <dbReference type="ChEBI" id="CHEBI:49552"/>
        <label>1</label>
    </ligand>
</feature>
<feature type="binding site" evidence="3">
    <location>
        <position position="19"/>
    </location>
    <ligand>
        <name>Cu(+)</name>
        <dbReference type="ChEBI" id="CHEBI:49552"/>
        <label>1</label>
    </ligand>
</feature>
<feature type="binding site" evidence="3">
    <location>
        <position position="83"/>
    </location>
    <ligand>
        <name>Cu(+)</name>
        <dbReference type="ChEBI" id="CHEBI:49552"/>
        <label>2</label>
    </ligand>
</feature>
<feature type="binding site" evidence="3">
    <location>
        <position position="86"/>
    </location>
    <ligand>
        <name>Cu(+)</name>
        <dbReference type="ChEBI" id="CHEBI:49552"/>
        <label>2</label>
    </ligand>
</feature>
<feature type="binding site">
    <location>
        <position position="690"/>
    </location>
    <ligand>
        <name>Mg(2+)</name>
        <dbReference type="ChEBI" id="CHEBI:18420"/>
    </ligand>
</feature>
<feature type="binding site">
    <location>
        <position position="694"/>
    </location>
    <ligand>
        <name>Mg(2+)</name>
        <dbReference type="ChEBI" id="CHEBI:18420"/>
    </ligand>
</feature>
<evidence type="ECO:0000250" key="1"/>
<evidence type="ECO:0000255" key="2"/>
<evidence type="ECO:0000255" key="3">
    <source>
        <dbReference type="PROSITE-ProRule" id="PRU00280"/>
    </source>
</evidence>
<evidence type="ECO:0000305" key="4"/>
<reference key="1">
    <citation type="journal article" date="2001" name="Lancet">
        <title>Whole genome sequencing of meticillin-resistant Staphylococcus aureus.</title>
        <authorList>
            <person name="Kuroda M."/>
            <person name="Ohta T."/>
            <person name="Uchiyama I."/>
            <person name="Baba T."/>
            <person name="Yuzawa H."/>
            <person name="Kobayashi I."/>
            <person name="Cui L."/>
            <person name="Oguchi A."/>
            <person name="Aoki K."/>
            <person name="Nagai Y."/>
            <person name="Lian J.-Q."/>
            <person name="Ito T."/>
            <person name="Kanamori M."/>
            <person name="Matsumaru H."/>
            <person name="Maruyama A."/>
            <person name="Murakami H."/>
            <person name="Hosoyama A."/>
            <person name="Mizutani-Ui Y."/>
            <person name="Takahashi N.K."/>
            <person name="Sawano T."/>
            <person name="Inoue R."/>
            <person name="Kaito C."/>
            <person name="Sekimizu K."/>
            <person name="Hirakawa H."/>
            <person name="Kuhara S."/>
            <person name="Goto S."/>
            <person name="Yabuzaki J."/>
            <person name="Kanehisa M."/>
            <person name="Yamashita A."/>
            <person name="Oshima K."/>
            <person name="Furuya K."/>
            <person name="Yoshino C."/>
            <person name="Shiba T."/>
            <person name="Hattori M."/>
            <person name="Ogasawara N."/>
            <person name="Hayashi H."/>
            <person name="Hiramatsu K."/>
        </authorList>
    </citation>
    <scope>NUCLEOTIDE SEQUENCE [LARGE SCALE GENOMIC DNA]</scope>
    <source>
        <strain>N315</strain>
    </source>
</reference>
<reference key="2">
    <citation type="submission" date="2007-10" db="UniProtKB">
        <title>Shotgun proteomic analysis of total and membrane protein extracts of S. aureus strain N315.</title>
        <authorList>
            <person name="Vaezzadeh A.R."/>
            <person name="Deshusses J."/>
            <person name="Lescuyer P."/>
            <person name="Hochstrasser D.F."/>
        </authorList>
    </citation>
    <scope>IDENTIFICATION BY MASS SPECTROMETRY [LARGE SCALE ANALYSIS]</scope>
    <source>
        <strain>N315</strain>
    </source>
</reference>
<name>COPA_STAAN</name>
<gene>
    <name type="primary">copA</name>
    <name type="ordered locus">SA2344</name>
</gene>
<protein>
    <recommendedName>
        <fullName>Copper-exporting P-type ATPase</fullName>
        <ecNumber>7.2.2.8</ecNumber>
    </recommendedName>
    <alternativeName>
        <fullName>Copper-exporting P-type ATPase A</fullName>
    </alternativeName>
    <alternativeName>
        <fullName>Cu(+)-exporting ATPase</fullName>
    </alternativeName>
</protein>